<name>SYE_BURMS</name>
<dbReference type="EC" id="6.1.1.17" evidence="1"/>
<dbReference type="EMBL" id="CP000526">
    <property type="protein sequence ID" value="ABM52788.1"/>
    <property type="molecule type" value="Genomic_DNA"/>
</dbReference>
<dbReference type="RefSeq" id="WP_004197094.1">
    <property type="nucleotide sequence ID" value="NC_008785.1"/>
</dbReference>
<dbReference type="SMR" id="A1V5B3"/>
<dbReference type="GeneID" id="92979324"/>
<dbReference type="KEGG" id="bmv:BMASAVP1_A2103"/>
<dbReference type="HOGENOM" id="CLU_015768_6_0_4"/>
<dbReference type="GO" id="GO:0005829">
    <property type="term" value="C:cytosol"/>
    <property type="evidence" value="ECO:0007669"/>
    <property type="project" value="TreeGrafter"/>
</dbReference>
<dbReference type="GO" id="GO:0005524">
    <property type="term" value="F:ATP binding"/>
    <property type="evidence" value="ECO:0007669"/>
    <property type="project" value="UniProtKB-UniRule"/>
</dbReference>
<dbReference type="GO" id="GO:0004818">
    <property type="term" value="F:glutamate-tRNA ligase activity"/>
    <property type="evidence" value="ECO:0007669"/>
    <property type="project" value="UniProtKB-UniRule"/>
</dbReference>
<dbReference type="GO" id="GO:0000049">
    <property type="term" value="F:tRNA binding"/>
    <property type="evidence" value="ECO:0007669"/>
    <property type="project" value="InterPro"/>
</dbReference>
<dbReference type="GO" id="GO:0008270">
    <property type="term" value="F:zinc ion binding"/>
    <property type="evidence" value="ECO:0007669"/>
    <property type="project" value="InterPro"/>
</dbReference>
<dbReference type="GO" id="GO:0006424">
    <property type="term" value="P:glutamyl-tRNA aminoacylation"/>
    <property type="evidence" value="ECO:0007669"/>
    <property type="project" value="UniProtKB-UniRule"/>
</dbReference>
<dbReference type="CDD" id="cd00808">
    <property type="entry name" value="GluRS_core"/>
    <property type="match status" value="1"/>
</dbReference>
<dbReference type="FunFam" id="3.40.50.620:FF:000007">
    <property type="entry name" value="Glutamate--tRNA ligase"/>
    <property type="match status" value="1"/>
</dbReference>
<dbReference type="Gene3D" id="1.10.10.350">
    <property type="match status" value="1"/>
</dbReference>
<dbReference type="Gene3D" id="1.10.8.70">
    <property type="entry name" value="Glutamate-tRNA synthetase, class I, anticodon-binding domain 1"/>
    <property type="match status" value="1"/>
</dbReference>
<dbReference type="Gene3D" id="3.40.50.620">
    <property type="entry name" value="HUPs"/>
    <property type="match status" value="1"/>
</dbReference>
<dbReference type="HAMAP" id="MF_00022">
    <property type="entry name" value="Glu_tRNA_synth_type1"/>
    <property type="match status" value="1"/>
</dbReference>
<dbReference type="InterPro" id="IPR045462">
    <property type="entry name" value="aa-tRNA-synth_I_cd-bd"/>
</dbReference>
<dbReference type="InterPro" id="IPR020751">
    <property type="entry name" value="aa-tRNA-synth_I_codon-bd_sub2"/>
</dbReference>
<dbReference type="InterPro" id="IPR001412">
    <property type="entry name" value="aa-tRNA-synth_I_CS"/>
</dbReference>
<dbReference type="InterPro" id="IPR008925">
    <property type="entry name" value="aa_tRNA-synth_I_cd-bd_sf"/>
</dbReference>
<dbReference type="InterPro" id="IPR004527">
    <property type="entry name" value="Glu-tRNA-ligase_bac/mito"/>
</dbReference>
<dbReference type="InterPro" id="IPR020752">
    <property type="entry name" value="Glu-tRNA-synth_I_codon-bd_sub1"/>
</dbReference>
<dbReference type="InterPro" id="IPR000924">
    <property type="entry name" value="Glu/Gln-tRNA-synth"/>
</dbReference>
<dbReference type="InterPro" id="IPR020058">
    <property type="entry name" value="Glu/Gln-tRNA-synth_Ib_cat-dom"/>
</dbReference>
<dbReference type="InterPro" id="IPR049940">
    <property type="entry name" value="GluQ/Sye"/>
</dbReference>
<dbReference type="InterPro" id="IPR033910">
    <property type="entry name" value="GluRS_core"/>
</dbReference>
<dbReference type="InterPro" id="IPR014729">
    <property type="entry name" value="Rossmann-like_a/b/a_fold"/>
</dbReference>
<dbReference type="NCBIfam" id="TIGR00464">
    <property type="entry name" value="gltX_bact"/>
    <property type="match status" value="1"/>
</dbReference>
<dbReference type="PANTHER" id="PTHR43311">
    <property type="entry name" value="GLUTAMATE--TRNA LIGASE"/>
    <property type="match status" value="1"/>
</dbReference>
<dbReference type="PANTHER" id="PTHR43311:SF2">
    <property type="entry name" value="GLUTAMATE--TRNA LIGASE, MITOCHONDRIAL-RELATED"/>
    <property type="match status" value="1"/>
</dbReference>
<dbReference type="Pfam" id="PF19269">
    <property type="entry name" value="Anticodon_2"/>
    <property type="match status" value="1"/>
</dbReference>
<dbReference type="Pfam" id="PF00749">
    <property type="entry name" value="tRNA-synt_1c"/>
    <property type="match status" value="1"/>
</dbReference>
<dbReference type="PRINTS" id="PR00987">
    <property type="entry name" value="TRNASYNTHGLU"/>
</dbReference>
<dbReference type="SUPFAM" id="SSF48163">
    <property type="entry name" value="An anticodon-binding domain of class I aminoacyl-tRNA synthetases"/>
    <property type="match status" value="1"/>
</dbReference>
<dbReference type="SUPFAM" id="SSF52374">
    <property type="entry name" value="Nucleotidylyl transferase"/>
    <property type="match status" value="1"/>
</dbReference>
<dbReference type="PROSITE" id="PS00178">
    <property type="entry name" value="AA_TRNA_LIGASE_I"/>
    <property type="match status" value="1"/>
</dbReference>
<gene>
    <name evidence="1" type="primary">gltX</name>
    <name type="ordered locus">BMASAVP1_A2103</name>
</gene>
<feature type="chain" id="PRO_1000001883" description="Glutamate--tRNA ligase">
    <location>
        <begin position="1"/>
        <end position="469"/>
    </location>
</feature>
<feature type="region of interest" description="Disordered" evidence="2">
    <location>
        <begin position="118"/>
        <end position="139"/>
    </location>
</feature>
<feature type="short sequence motif" description="'HIGH' region" evidence="1">
    <location>
        <begin position="11"/>
        <end position="21"/>
    </location>
</feature>
<feature type="short sequence motif" description="'KMSKS' region" evidence="1">
    <location>
        <begin position="243"/>
        <end position="247"/>
    </location>
</feature>
<feature type="compositionally biased region" description="Basic and acidic residues" evidence="2">
    <location>
        <begin position="118"/>
        <end position="131"/>
    </location>
</feature>
<feature type="binding site" evidence="1">
    <location>
        <position position="246"/>
    </location>
    <ligand>
        <name>ATP</name>
        <dbReference type="ChEBI" id="CHEBI:30616"/>
    </ligand>
</feature>
<reference key="1">
    <citation type="journal article" date="2010" name="Genome Biol. Evol.">
        <title>Continuing evolution of Burkholderia mallei through genome reduction and large-scale rearrangements.</title>
        <authorList>
            <person name="Losada L."/>
            <person name="Ronning C.M."/>
            <person name="DeShazer D."/>
            <person name="Woods D."/>
            <person name="Fedorova N."/>
            <person name="Kim H.S."/>
            <person name="Shabalina S.A."/>
            <person name="Pearson T.R."/>
            <person name="Brinkac L."/>
            <person name="Tan P."/>
            <person name="Nandi T."/>
            <person name="Crabtree J."/>
            <person name="Badger J."/>
            <person name="Beckstrom-Sternberg S."/>
            <person name="Saqib M."/>
            <person name="Schutzer S.E."/>
            <person name="Keim P."/>
            <person name="Nierman W.C."/>
        </authorList>
    </citation>
    <scope>NUCLEOTIDE SEQUENCE [LARGE SCALE GENOMIC DNA]</scope>
    <source>
        <strain>SAVP1</strain>
    </source>
</reference>
<protein>
    <recommendedName>
        <fullName evidence="1">Glutamate--tRNA ligase</fullName>
        <ecNumber evidence="1">6.1.1.17</ecNumber>
    </recommendedName>
    <alternativeName>
        <fullName evidence="1">Glutamyl-tRNA synthetase</fullName>
        <shortName evidence="1">GluRS</shortName>
    </alternativeName>
</protein>
<organism>
    <name type="scientific">Burkholderia mallei (strain SAVP1)</name>
    <dbReference type="NCBI Taxonomy" id="320388"/>
    <lineage>
        <taxon>Bacteria</taxon>
        <taxon>Pseudomonadati</taxon>
        <taxon>Pseudomonadota</taxon>
        <taxon>Betaproteobacteria</taxon>
        <taxon>Burkholderiales</taxon>
        <taxon>Burkholderiaceae</taxon>
        <taxon>Burkholderia</taxon>
        <taxon>pseudomallei group</taxon>
    </lineage>
</organism>
<accession>A1V5B3</accession>
<comment type="function">
    <text evidence="1">Catalyzes the attachment of glutamate to tRNA(Glu) in a two-step reaction: glutamate is first activated by ATP to form Glu-AMP and then transferred to the acceptor end of tRNA(Glu).</text>
</comment>
<comment type="catalytic activity">
    <reaction evidence="1">
        <text>tRNA(Glu) + L-glutamate + ATP = L-glutamyl-tRNA(Glu) + AMP + diphosphate</text>
        <dbReference type="Rhea" id="RHEA:23540"/>
        <dbReference type="Rhea" id="RHEA-COMP:9663"/>
        <dbReference type="Rhea" id="RHEA-COMP:9680"/>
        <dbReference type="ChEBI" id="CHEBI:29985"/>
        <dbReference type="ChEBI" id="CHEBI:30616"/>
        <dbReference type="ChEBI" id="CHEBI:33019"/>
        <dbReference type="ChEBI" id="CHEBI:78442"/>
        <dbReference type="ChEBI" id="CHEBI:78520"/>
        <dbReference type="ChEBI" id="CHEBI:456215"/>
        <dbReference type="EC" id="6.1.1.17"/>
    </reaction>
</comment>
<comment type="subunit">
    <text evidence="1">Monomer.</text>
</comment>
<comment type="subcellular location">
    <subcellularLocation>
        <location evidence="1">Cytoplasm</location>
    </subcellularLocation>
</comment>
<comment type="similarity">
    <text evidence="1">Belongs to the class-I aminoacyl-tRNA synthetase family. Glutamate--tRNA ligase type 1 subfamily.</text>
</comment>
<evidence type="ECO:0000255" key="1">
    <source>
        <dbReference type="HAMAP-Rule" id="MF_00022"/>
    </source>
</evidence>
<evidence type="ECO:0000256" key="2">
    <source>
        <dbReference type="SAM" id="MobiDB-lite"/>
    </source>
</evidence>
<sequence length="469" mass="52193">MTRPVRTRFAPSPTGFIHLGNIRSALYPWAFARKMKGTFVLRIEDTDLERSTEASVDAILEGMAWLGLDYDEGPYYQMQRMDRYREVLAQMLEKDLVYPCYMSTEELDALRERQRAAGEKPRYDGTWRPEPGKVLPEPPAGVTPVLRFRNPLTGSVVWDDAVKGRVEISNEELDDLVIARPDGTPTYNFCVVVDDLDMGITHVIRGDDHVNNTPRQINILRALGGEVPVYAHLPTVLNEQGEKMSKRHGAMSVMGYRDAGYLPEAVLNYLARLGWSHGDAEIFSREQFVEWFDLEHLGKSPAQYDHNKLNWLNNHYIKEADDARLAELAKPFFAALGIDADTIARGPDLVGVMGLMKDRASTVKEIAENSTMFYRSPAPDAQALAQHVTDAVRPALAEFAAALKTAEWTKEAIAAALKAVLGAHKLKMPQLAMPVRLLVAGTTHTPSIDAVLLLFGRDVVVSRLAAALA</sequence>
<keyword id="KW-0030">Aminoacyl-tRNA synthetase</keyword>
<keyword id="KW-0067">ATP-binding</keyword>
<keyword id="KW-0963">Cytoplasm</keyword>
<keyword id="KW-0436">Ligase</keyword>
<keyword id="KW-0547">Nucleotide-binding</keyword>
<keyword id="KW-0648">Protein biosynthesis</keyword>
<proteinExistence type="inferred from homology"/>